<name>SYV_BRUME</name>
<sequence>MLEKTYDAAATEPKIAERWEEAGAFKAGAGAKPGADPFAVVIPPPNVTGSLHMGHALNNTIQDIMVRFERMRGKNVLWQPGMDHAGIATQMVVERQLAERKEPNRHAMGREKFIERIWQWKAESGGMISNQLRRLGASCDWSRERFTMDEGLSRAVLEVFVTLYKQGLIYRDKRLVNWDPKLLTAISDIEVESREIKGHLWHFRYPLENVPFDPENPHTYIIVATTRPETMLGDTGVAVNPKDERYHALVGNDVILPLVGRHIPIVADDYADPEAGSGTVKITPAHDFNDFEVGKRNNLRAINILTPEAAITLKDNVDFLEDLELTAELKALIVELDGMDRFAARKRIVELMDERGYLEKIDDHTHAVPHGDRGGVPIEPYLTDQWYVNAGELAKPAMAAVRDGRTQIVPKNWEKTYFDWMENIQPWCVSRQLWWGHQIPAWYGPDSHCFVEKSEAEAKAAARAHYGEDVALERDTDVLDTWFSSALWPFSTLGWPDKTPELATYYPTSVLVTGFDILFFWVARMMMMGLHFMEEIPFHTVYLHALVRDKHGAKMSKSKGNVIDPLELMDEYGADALRFTLAIMAAQGRDVKLDPARIAGYRNFGTKLWNATRFAQMNGVKLAPDFRPENAKLAVNRWILTELTRATRAVTEGIATYRFNEAAGAAYRFVWNQFCDWYLEFLKPIFMGDDEAAKAEAQATAAYCLDQVYKLLHPFMPFMTEELWSLTASEGKKRDTVLALAEWPELSFEDEDAAADINWLVDLVTGIRSVRAEMNVPAGAIAPVVVLDANKVTVDRFARHDAAIKRLARVERISFEQQAPKGAAQMLLGEATICIPLGSLIDLQAEAARLAKEAGKIAAEMDRIEKKLANEKFVANAREEVVEAERERLLELKEAAQRVATAESRIRDAS</sequence>
<gene>
    <name evidence="1" type="primary">valS</name>
    <name type="ordered locus">BMEI1027</name>
</gene>
<protein>
    <recommendedName>
        <fullName evidence="1">Valine--tRNA ligase</fullName>
        <ecNumber evidence="1">6.1.1.9</ecNumber>
    </recommendedName>
    <alternativeName>
        <fullName evidence="1">Valyl-tRNA synthetase</fullName>
        <shortName evidence="1">ValRS</shortName>
    </alternativeName>
</protein>
<keyword id="KW-0030">Aminoacyl-tRNA synthetase</keyword>
<keyword id="KW-0067">ATP-binding</keyword>
<keyword id="KW-0175">Coiled coil</keyword>
<keyword id="KW-0963">Cytoplasm</keyword>
<keyword id="KW-0436">Ligase</keyword>
<keyword id="KW-0547">Nucleotide-binding</keyword>
<keyword id="KW-0648">Protein biosynthesis</keyword>
<dbReference type="EC" id="6.1.1.9" evidence="1"/>
<dbReference type="EMBL" id="AE008917">
    <property type="protein sequence ID" value="AAL52208.1"/>
    <property type="molecule type" value="Genomic_DNA"/>
</dbReference>
<dbReference type="PIR" id="AE3380">
    <property type="entry name" value="AE3380"/>
</dbReference>
<dbReference type="RefSeq" id="WP_004686808.1">
    <property type="nucleotide sequence ID" value="NZ_GG703778.1"/>
</dbReference>
<dbReference type="SMR" id="Q8YGX8"/>
<dbReference type="GeneID" id="29593855"/>
<dbReference type="KEGG" id="bme:BMEI1027"/>
<dbReference type="KEGG" id="bmel:DK63_388"/>
<dbReference type="PATRIC" id="fig|224914.52.peg.405"/>
<dbReference type="eggNOG" id="COG0525">
    <property type="taxonomic scope" value="Bacteria"/>
</dbReference>
<dbReference type="PhylomeDB" id="Q8YGX8"/>
<dbReference type="Proteomes" id="UP000000419">
    <property type="component" value="Chromosome I"/>
</dbReference>
<dbReference type="GO" id="GO:0005829">
    <property type="term" value="C:cytosol"/>
    <property type="evidence" value="ECO:0007669"/>
    <property type="project" value="TreeGrafter"/>
</dbReference>
<dbReference type="GO" id="GO:0002161">
    <property type="term" value="F:aminoacyl-tRNA deacylase activity"/>
    <property type="evidence" value="ECO:0007669"/>
    <property type="project" value="InterPro"/>
</dbReference>
<dbReference type="GO" id="GO:0005524">
    <property type="term" value="F:ATP binding"/>
    <property type="evidence" value="ECO:0007669"/>
    <property type="project" value="UniProtKB-UniRule"/>
</dbReference>
<dbReference type="GO" id="GO:0004832">
    <property type="term" value="F:valine-tRNA ligase activity"/>
    <property type="evidence" value="ECO:0007669"/>
    <property type="project" value="UniProtKB-UniRule"/>
</dbReference>
<dbReference type="GO" id="GO:0006438">
    <property type="term" value="P:valyl-tRNA aminoacylation"/>
    <property type="evidence" value="ECO:0007669"/>
    <property type="project" value="UniProtKB-UniRule"/>
</dbReference>
<dbReference type="CDD" id="cd07962">
    <property type="entry name" value="Anticodon_Ia_Val"/>
    <property type="match status" value="1"/>
</dbReference>
<dbReference type="CDD" id="cd00817">
    <property type="entry name" value="ValRS_core"/>
    <property type="match status" value="1"/>
</dbReference>
<dbReference type="FunFam" id="1.10.287.380:FF:000001">
    <property type="entry name" value="Valine--tRNA ligase"/>
    <property type="match status" value="1"/>
</dbReference>
<dbReference type="FunFam" id="3.40.50.620:FF:000032">
    <property type="entry name" value="Valine--tRNA ligase"/>
    <property type="match status" value="1"/>
</dbReference>
<dbReference type="FunFam" id="3.40.50.620:FF:000078">
    <property type="entry name" value="Valine--tRNA ligase, mitochondrial"/>
    <property type="match status" value="1"/>
</dbReference>
<dbReference type="Gene3D" id="3.40.50.620">
    <property type="entry name" value="HUPs"/>
    <property type="match status" value="2"/>
</dbReference>
<dbReference type="Gene3D" id="1.10.730.10">
    <property type="entry name" value="Isoleucyl-tRNA Synthetase, Domain 1"/>
    <property type="match status" value="1"/>
</dbReference>
<dbReference type="Gene3D" id="1.10.287.380">
    <property type="entry name" value="Valyl-tRNA synthetase, C-terminal domain"/>
    <property type="match status" value="1"/>
</dbReference>
<dbReference type="Gene3D" id="3.90.740.10">
    <property type="entry name" value="Valyl/Leucyl/Isoleucyl-tRNA synthetase, editing domain"/>
    <property type="match status" value="1"/>
</dbReference>
<dbReference type="HAMAP" id="MF_02004">
    <property type="entry name" value="Val_tRNA_synth_type1"/>
    <property type="match status" value="1"/>
</dbReference>
<dbReference type="InterPro" id="IPR001412">
    <property type="entry name" value="aa-tRNA-synth_I_CS"/>
</dbReference>
<dbReference type="InterPro" id="IPR002300">
    <property type="entry name" value="aa-tRNA-synth_Ia"/>
</dbReference>
<dbReference type="InterPro" id="IPR033705">
    <property type="entry name" value="Anticodon_Ia_Val"/>
</dbReference>
<dbReference type="InterPro" id="IPR013155">
    <property type="entry name" value="M/V/L/I-tRNA-synth_anticd-bd"/>
</dbReference>
<dbReference type="InterPro" id="IPR014729">
    <property type="entry name" value="Rossmann-like_a/b/a_fold"/>
</dbReference>
<dbReference type="InterPro" id="IPR010978">
    <property type="entry name" value="tRNA-bd_arm"/>
</dbReference>
<dbReference type="InterPro" id="IPR009080">
    <property type="entry name" value="tRNAsynth_Ia_anticodon-bd"/>
</dbReference>
<dbReference type="InterPro" id="IPR037118">
    <property type="entry name" value="Val-tRNA_synth_C_sf"/>
</dbReference>
<dbReference type="InterPro" id="IPR019499">
    <property type="entry name" value="Val-tRNA_synth_tRNA-bd"/>
</dbReference>
<dbReference type="InterPro" id="IPR009008">
    <property type="entry name" value="Val/Leu/Ile-tRNA-synth_edit"/>
</dbReference>
<dbReference type="InterPro" id="IPR002303">
    <property type="entry name" value="Valyl-tRNA_ligase"/>
</dbReference>
<dbReference type="NCBIfam" id="NF004349">
    <property type="entry name" value="PRK05729.1"/>
    <property type="match status" value="1"/>
</dbReference>
<dbReference type="NCBIfam" id="TIGR00422">
    <property type="entry name" value="valS"/>
    <property type="match status" value="1"/>
</dbReference>
<dbReference type="PANTHER" id="PTHR11946:SF93">
    <property type="entry name" value="VALINE--TRNA LIGASE, CHLOROPLASTIC_MITOCHONDRIAL 2"/>
    <property type="match status" value="1"/>
</dbReference>
<dbReference type="PANTHER" id="PTHR11946">
    <property type="entry name" value="VALYL-TRNA SYNTHETASES"/>
    <property type="match status" value="1"/>
</dbReference>
<dbReference type="Pfam" id="PF08264">
    <property type="entry name" value="Anticodon_1"/>
    <property type="match status" value="1"/>
</dbReference>
<dbReference type="Pfam" id="PF00133">
    <property type="entry name" value="tRNA-synt_1"/>
    <property type="match status" value="1"/>
</dbReference>
<dbReference type="Pfam" id="PF10458">
    <property type="entry name" value="Val_tRNA-synt_C"/>
    <property type="match status" value="1"/>
</dbReference>
<dbReference type="PRINTS" id="PR00986">
    <property type="entry name" value="TRNASYNTHVAL"/>
</dbReference>
<dbReference type="SUPFAM" id="SSF47323">
    <property type="entry name" value="Anticodon-binding domain of a subclass of class I aminoacyl-tRNA synthetases"/>
    <property type="match status" value="1"/>
</dbReference>
<dbReference type="SUPFAM" id="SSF52374">
    <property type="entry name" value="Nucleotidylyl transferase"/>
    <property type="match status" value="1"/>
</dbReference>
<dbReference type="SUPFAM" id="SSF46589">
    <property type="entry name" value="tRNA-binding arm"/>
    <property type="match status" value="1"/>
</dbReference>
<dbReference type="SUPFAM" id="SSF50677">
    <property type="entry name" value="ValRS/IleRS/LeuRS editing domain"/>
    <property type="match status" value="1"/>
</dbReference>
<dbReference type="PROSITE" id="PS00178">
    <property type="entry name" value="AA_TRNA_LIGASE_I"/>
    <property type="match status" value="1"/>
</dbReference>
<comment type="function">
    <text evidence="1">Catalyzes the attachment of valine to tRNA(Val). As ValRS can inadvertently accommodate and process structurally similar amino acids such as threonine, to avoid such errors, it has a 'posttransfer' editing activity that hydrolyzes mischarged Thr-tRNA(Val) in a tRNA-dependent manner.</text>
</comment>
<comment type="catalytic activity">
    <reaction evidence="1">
        <text>tRNA(Val) + L-valine + ATP = L-valyl-tRNA(Val) + AMP + diphosphate</text>
        <dbReference type="Rhea" id="RHEA:10704"/>
        <dbReference type="Rhea" id="RHEA-COMP:9672"/>
        <dbReference type="Rhea" id="RHEA-COMP:9708"/>
        <dbReference type="ChEBI" id="CHEBI:30616"/>
        <dbReference type="ChEBI" id="CHEBI:33019"/>
        <dbReference type="ChEBI" id="CHEBI:57762"/>
        <dbReference type="ChEBI" id="CHEBI:78442"/>
        <dbReference type="ChEBI" id="CHEBI:78537"/>
        <dbReference type="ChEBI" id="CHEBI:456215"/>
        <dbReference type="EC" id="6.1.1.9"/>
    </reaction>
</comment>
<comment type="subunit">
    <text evidence="1">Monomer.</text>
</comment>
<comment type="subcellular location">
    <subcellularLocation>
        <location evidence="1">Cytoplasm</location>
    </subcellularLocation>
</comment>
<comment type="domain">
    <text evidence="1">ValRS has two distinct active sites: one for aminoacylation and one for editing. The misactivated threonine is translocated from the active site to the editing site.</text>
</comment>
<comment type="domain">
    <text evidence="1">The C-terminal coiled-coil domain is crucial for aminoacylation activity.</text>
</comment>
<comment type="similarity">
    <text evidence="1">Belongs to the class-I aminoacyl-tRNA synthetase family. ValS type 1 subfamily.</text>
</comment>
<proteinExistence type="inferred from homology"/>
<reference key="1">
    <citation type="journal article" date="2002" name="Proc. Natl. Acad. Sci. U.S.A.">
        <title>The genome sequence of the facultative intracellular pathogen Brucella melitensis.</title>
        <authorList>
            <person name="DelVecchio V.G."/>
            <person name="Kapatral V."/>
            <person name="Redkar R.J."/>
            <person name="Patra G."/>
            <person name="Mujer C."/>
            <person name="Los T."/>
            <person name="Ivanova N."/>
            <person name="Anderson I."/>
            <person name="Bhattacharyya A."/>
            <person name="Lykidis A."/>
            <person name="Reznik G."/>
            <person name="Jablonski L."/>
            <person name="Larsen N."/>
            <person name="D'Souza M."/>
            <person name="Bernal A."/>
            <person name="Mazur M."/>
            <person name="Goltsman E."/>
            <person name="Selkov E."/>
            <person name="Elzer P.H."/>
            <person name="Hagius S."/>
            <person name="O'Callaghan D."/>
            <person name="Letesson J.-J."/>
            <person name="Haselkorn R."/>
            <person name="Kyrpides N.C."/>
            <person name="Overbeek R."/>
        </authorList>
    </citation>
    <scope>NUCLEOTIDE SEQUENCE [LARGE SCALE GENOMIC DNA]</scope>
    <source>
        <strain>ATCC 23456 / CCUG 17765 / NCTC 10094 / 16M</strain>
    </source>
</reference>
<accession>Q8YGX8</accession>
<evidence type="ECO:0000255" key="1">
    <source>
        <dbReference type="HAMAP-Rule" id="MF_02004"/>
    </source>
</evidence>
<feature type="chain" id="PRO_0000224450" description="Valine--tRNA ligase">
    <location>
        <begin position="1"/>
        <end position="910"/>
    </location>
</feature>
<feature type="coiled-coil region" evidence="1">
    <location>
        <begin position="842"/>
        <end position="910"/>
    </location>
</feature>
<feature type="short sequence motif" description="'HIGH' region">
    <location>
        <begin position="45"/>
        <end position="55"/>
    </location>
</feature>
<feature type="short sequence motif" description="'KMSKS' region">
    <location>
        <begin position="554"/>
        <end position="558"/>
    </location>
</feature>
<feature type="binding site" evidence="1">
    <location>
        <position position="557"/>
    </location>
    <ligand>
        <name>ATP</name>
        <dbReference type="ChEBI" id="CHEBI:30616"/>
    </ligand>
</feature>
<organism>
    <name type="scientific">Brucella melitensis biotype 1 (strain ATCC 23456 / CCUG 17765 / NCTC 10094 / 16M)</name>
    <dbReference type="NCBI Taxonomy" id="224914"/>
    <lineage>
        <taxon>Bacteria</taxon>
        <taxon>Pseudomonadati</taxon>
        <taxon>Pseudomonadota</taxon>
        <taxon>Alphaproteobacteria</taxon>
        <taxon>Hyphomicrobiales</taxon>
        <taxon>Brucellaceae</taxon>
        <taxon>Brucella/Ochrobactrum group</taxon>
        <taxon>Brucella</taxon>
    </lineage>
</organism>